<reference key="1">
    <citation type="journal article" date="2002" name="Proc. Natl. Acad. Sci. U.S.A.">
        <title>Extensive mosaic structure revealed by the complete genome sequence of uropathogenic Escherichia coli.</title>
        <authorList>
            <person name="Welch R.A."/>
            <person name="Burland V."/>
            <person name="Plunkett G. III"/>
            <person name="Redford P."/>
            <person name="Roesch P."/>
            <person name="Rasko D."/>
            <person name="Buckles E.L."/>
            <person name="Liou S.-R."/>
            <person name="Boutin A."/>
            <person name="Hackett J."/>
            <person name="Stroud D."/>
            <person name="Mayhew G.F."/>
            <person name="Rose D.J."/>
            <person name="Zhou S."/>
            <person name="Schwartz D.C."/>
            <person name="Perna N.T."/>
            <person name="Mobley H.L.T."/>
            <person name="Donnenberg M.S."/>
            <person name="Blattner F.R."/>
        </authorList>
    </citation>
    <scope>NUCLEOTIDE SEQUENCE [LARGE SCALE GENOMIC DNA]</scope>
    <source>
        <strain>CFT073 / ATCC 700928 / UPEC</strain>
    </source>
</reference>
<sequence length="609" mass="66778">MCGIVGAIAQRDVAEILLEGLRRLEYRGYDSAGLAVVDAEGHMTRLRRLGKVQMLAQAAEEHPLHGGTGIAHTRWATHGEPSEANAHPHVSEHIVVVHNGIIENHEPLREALKARGYTFVSETDTEVIAHLVNWELKQGGTLREAVLRAIPQLRGAYGTVIMDSRHPDTLLAARSGSPLVIGLGMGENFIASDQLALLPVTRRFIFLEEGDIAEITRRSVNIFDKTGAEVKRQDIESNLQYDAGDKGIYRHYMQKEIYEQPNAIKNTLTGRISHGQVDLSELGPNADELLSKVEHIQILACGTSYNSGMVSRYWFESLAGIPCDVEIASEFRYRKSAVRRNSLMITLSQSGETADTLAGLRLSKELGYLGSLAICNVPGSSLVRESDLALMTNAGTEIGVASTKAFTTQLTVLLMLVAKLSRLKGLDASIEHDIVHGLQALPSRIEQMLSQDKRIEALAEDFSDKHHALFLGRGDQYPIALEGALKLKEISYIHAEAYAAGELKHGPLALIDADMPVIVVAPNNELLEKLKSNIEEVRARGGQLYVFADQDAGFVGSDNMHIIEMPHVEEVIAPIFYTVPLQLLAYHVALIKGTDVDQPRNLAKSVTVE</sequence>
<name>GLMS_ECOL6</name>
<accession>Q8FBT4</accession>
<organism>
    <name type="scientific">Escherichia coli O6:H1 (strain CFT073 / ATCC 700928 / UPEC)</name>
    <dbReference type="NCBI Taxonomy" id="199310"/>
    <lineage>
        <taxon>Bacteria</taxon>
        <taxon>Pseudomonadati</taxon>
        <taxon>Pseudomonadota</taxon>
        <taxon>Gammaproteobacteria</taxon>
        <taxon>Enterobacterales</taxon>
        <taxon>Enterobacteriaceae</taxon>
        <taxon>Escherichia</taxon>
    </lineage>
</organism>
<evidence type="ECO:0000255" key="1">
    <source>
        <dbReference type="HAMAP-Rule" id="MF_00164"/>
    </source>
</evidence>
<dbReference type="EC" id="2.6.1.16" evidence="1"/>
<dbReference type="EMBL" id="AE014075">
    <property type="protein sequence ID" value="AAN83086.1"/>
    <property type="molecule type" value="Genomic_DNA"/>
</dbReference>
<dbReference type="RefSeq" id="WP_000334050.1">
    <property type="nucleotide sequence ID" value="NZ_CP051263.1"/>
</dbReference>
<dbReference type="SMR" id="Q8FBT4"/>
<dbReference type="STRING" id="199310.c4654"/>
<dbReference type="MEROPS" id="C44.971"/>
<dbReference type="KEGG" id="ecc:c4654"/>
<dbReference type="eggNOG" id="COG0449">
    <property type="taxonomic scope" value="Bacteria"/>
</dbReference>
<dbReference type="HOGENOM" id="CLU_012520_5_2_6"/>
<dbReference type="BioCyc" id="ECOL199310:C4654-MONOMER"/>
<dbReference type="Proteomes" id="UP000001410">
    <property type="component" value="Chromosome"/>
</dbReference>
<dbReference type="GO" id="GO:0005829">
    <property type="term" value="C:cytosol"/>
    <property type="evidence" value="ECO:0007669"/>
    <property type="project" value="TreeGrafter"/>
</dbReference>
<dbReference type="GO" id="GO:0097367">
    <property type="term" value="F:carbohydrate derivative binding"/>
    <property type="evidence" value="ECO:0007669"/>
    <property type="project" value="InterPro"/>
</dbReference>
<dbReference type="GO" id="GO:0004360">
    <property type="term" value="F:glutamine-fructose-6-phosphate transaminase (isomerizing) activity"/>
    <property type="evidence" value="ECO:0007669"/>
    <property type="project" value="UniProtKB-UniRule"/>
</dbReference>
<dbReference type="GO" id="GO:0005975">
    <property type="term" value="P:carbohydrate metabolic process"/>
    <property type="evidence" value="ECO:0007669"/>
    <property type="project" value="UniProtKB-UniRule"/>
</dbReference>
<dbReference type="GO" id="GO:0006002">
    <property type="term" value="P:fructose 6-phosphate metabolic process"/>
    <property type="evidence" value="ECO:0007669"/>
    <property type="project" value="TreeGrafter"/>
</dbReference>
<dbReference type="GO" id="GO:0006487">
    <property type="term" value="P:protein N-linked glycosylation"/>
    <property type="evidence" value="ECO:0007669"/>
    <property type="project" value="TreeGrafter"/>
</dbReference>
<dbReference type="GO" id="GO:0006047">
    <property type="term" value="P:UDP-N-acetylglucosamine metabolic process"/>
    <property type="evidence" value="ECO:0007669"/>
    <property type="project" value="TreeGrafter"/>
</dbReference>
<dbReference type="CDD" id="cd00714">
    <property type="entry name" value="GFAT"/>
    <property type="match status" value="1"/>
</dbReference>
<dbReference type="CDD" id="cd05008">
    <property type="entry name" value="SIS_GlmS_GlmD_1"/>
    <property type="match status" value="1"/>
</dbReference>
<dbReference type="CDD" id="cd05009">
    <property type="entry name" value="SIS_GlmS_GlmD_2"/>
    <property type="match status" value="1"/>
</dbReference>
<dbReference type="FunFam" id="3.40.50.10490:FF:000001">
    <property type="entry name" value="Glutamine--fructose-6-phosphate aminotransferase [isomerizing]"/>
    <property type="match status" value="1"/>
</dbReference>
<dbReference type="FunFam" id="3.40.50.10490:FF:000002">
    <property type="entry name" value="Glutamine--fructose-6-phosphate aminotransferase [isomerizing]"/>
    <property type="match status" value="1"/>
</dbReference>
<dbReference type="FunFam" id="3.60.20.10:FF:000006">
    <property type="entry name" value="Glutamine--fructose-6-phosphate aminotransferase [isomerizing]"/>
    <property type="match status" value="1"/>
</dbReference>
<dbReference type="Gene3D" id="3.40.50.10490">
    <property type="entry name" value="Glucose-6-phosphate isomerase like protein, domain 1"/>
    <property type="match status" value="2"/>
</dbReference>
<dbReference type="Gene3D" id="3.60.20.10">
    <property type="entry name" value="Glutamine Phosphoribosylpyrophosphate, subunit 1, domain 1"/>
    <property type="match status" value="1"/>
</dbReference>
<dbReference type="HAMAP" id="MF_00164">
    <property type="entry name" value="GlmS"/>
    <property type="match status" value="1"/>
</dbReference>
<dbReference type="InterPro" id="IPR017932">
    <property type="entry name" value="GATase_2_dom"/>
</dbReference>
<dbReference type="InterPro" id="IPR005855">
    <property type="entry name" value="GFAT"/>
</dbReference>
<dbReference type="InterPro" id="IPR047084">
    <property type="entry name" value="GFAT_N"/>
</dbReference>
<dbReference type="InterPro" id="IPR035466">
    <property type="entry name" value="GlmS/AgaS_SIS"/>
</dbReference>
<dbReference type="InterPro" id="IPR035490">
    <property type="entry name" value="GlmS/FrlB_SIS"/>
</dbReference>
<dbReference type="InterPro" id="IPR029055">
    <property type="entry name" value="Ntn_hydrolases_N"/>
</dbReference>
<dbReference type="InterPro" id="IPR001347">
    <property type="entry name" value="SIS_dom"/>
</dbReference>
<dbReference type="InterPro" id="IPR046348">
    <property type="entry name" value="SIS_dom_sf"/>
</dbReference>
<dbReference type="NCBIfam" id="TIGR01135">
    <property type="entry name" value="glmS"/>
    <property type="match status" value="1"/>
</dbReference>
<dbReference type="NCBIfam" id="NF001484">
    <property type="entry name" value="PRK00331.1"/>
    <property type="match status" value="1"/>
</dbReference>
<dbReference type="PANTHER" id="PTHR10937">
    <property type="entry name" value="GLUCOSAMINE--FRUCTOSE-6-PHOSPHATE AMINOTRANSFERASE, ISOMERIZING"/>
    <property type="match status" value="1"/>
</dbReference>
<dbReference type="PANTHER" id="PTHR10937:SF0">
    <property type="entry name" value="GLUTAMINE--FRUCTOSE-6-PHOSPHATE TRANSAMINASE (ISOMERIZING)"/>
    <property type="match status" value="1"/>
</dbReference>
<dbReference type="Pfam" id="PF13522">
    <property type="entry name" value="GATase_6"/>
    <property type="match status" value="1"/>
</dbReference>
<dbReference type="Pfam" id="PF01380">
    <property type="entry name" value="SIS"/>
    <property type="match status" value="2"/>
</dbReference>
<dbReference type="SUPFAM" id="SSF56235">
    <property type="entry name" value="N-terminal nucleophile aminohydrolases (Ntn hydrolases)"/>
    <property type="match status" value="1"/>
</dbReference>
<dbReference type="SUPFAM" id="SSF53697">
    <property type="entry name" value="SIS domain"/>
    <property type="match status" value="1"/>
</dbReference>
<dbReference type="PROSITE" id="PS51278">
    <property type="entry name" value="GATASE_TYPE_2"/>
    <property type="match status" value="1"/>
</dbReference>
<dbReference type="PROSITE" id="PS51464">
    <property type="entry name" value="SIS"/>
    <property type="match status" value="2"/>
</dbReference>
<protein>
    <recommendedName>
        <fullName evidence="1">Glutamine--fructose-6-phosphate aminotransferase [isomerizing]</fullName>
        <ecNumber evidence="1">2.6.1.16</ecNumber>
    </recommendedName>
    <alternativeName>
        <fullName evidence="1">D-fructose-6-phosphate amidotransferase</fullName>
    </alternativeName>
    <alternativeName>
        <fullName evidence="1">GFAT</fullName>
    </alternativeName>
    <alternativeName>
        <fullName evidence="1">Glucosamine-6-phosphate synthase</fullName>
    </alternativeName>
    <alternativeName>
        <fullName evidence="1">Hexosephosphate aminotransferase</fullName>
    </alternativeName>
    <alternativeName>
        <fullName evidence="1">L-glutamine--D-fructose-6-phosphate amidotransferase</fullName>
    </alternativeName>
</protein>
<comment type="function">
    <text evidence="1">Catalyzes the first step in hexosamine metabolism, converting fructose-6P into glucosamine-6P using glutamine as a nitrogen source.</text>
</comment>
<comment type="catalytic activity">
    <reaction evidence="1">
        <text>D-fructose 6-phosphate + L-glutamine = D-glucosamine 6-phosphate + L-glutamate</text>
        <dbReference type="Rhea" id="RHEA:13237"/>
        <dbReference type="ChEBI" id="CHEBI:29985"/>
        <dbReference type="ChEBI" id="CHEBI:58359"/>
        <dbReference type="ChEBI" id="CHEBI:58725"/>
        <dbReference type="ChEBI" id="CHEBI:61527"/>
        <dbReference type="EC" id="2.6.1.16"/>
    </reaction>
</comment>
<comment type="subunit">
    <text evidence="1">Homodimer.</text>
</comment>
<comment type="subcellular location">
    <subcellularLocation>
        <location evidence="1">Cytoplasm</location>
    </subcellularLocation>
</comment>
<keyword id="KW-0032">Aminotransferase</keyword>
<keyword id="KW-0963">Cytoplasm</keyword>
<keyword id="KW-0315">Glutamine amidotransferase</keyword>
<keyword id="KW-1185">Reference proteome</keyword>
<keyword id="KW-0677">Repeat</keyword>
<keyword id="KW-0808">Transferase</keyword>
<proteinExistence type="inferred from homology"/>
<gene>
    <name evidence="1" type="primary">glmS</name>
    <name type="ordered locus">c4654</name>
</gene>
<feature type="initiator methionine" description="Removed" evidence="1">
    <location>
        <position position="1"/>
    </location>
</feature>
<feature type="chain" id="PRO_0000135329" description="Glutamine--fructose-6-phosphate aminotransferase [isomerizing]">
    <location>
        <begin position="2"/>
        <end position="609"/>
    </location>
</feature>
<feature type="domain" description="Glutamine amidotransferase type-2" evidence="1">
    <location>
        <begin position="2"/>
        <end position="218"/>
    </location>
</feature>
<feature type="domain" description="SIS 1" evidence="1">
    <location>
        <begin position="286"/>
        <end position="426"/>
    </location>
</feature>
<feature type="domain" description="SIS 2" evidence="1">
    <location>
        <begin position="458"/>
        <end position="599"/>
    </location>
</feature>
<feature type="active site" description="Nucleophile; for GATase activity" evidence="1">
    <location>
        <position position="2"/>
    </location>
</feature>
<feature type="active site" description="For Fru-6P isomerization activity" evidence="1">
    <location>
        <position position="604"/>
    </location>
</feature>